<feature type="chain" id="PRO_0000145627" description="Glyceraldehyde-3-phosphate dehydrogenase 3">
    <location>
        <begin position="1"/>
        <end position="337"/>
    </location>
</feature>
<feature type="active site" description="Nucleophile" evidence="1">
    <location>
        <position position="153"/>
    </location>
</feature>
<feature type="binding site" evidence="1">
    <location>
        <begin position="12"/>
        <end position="13"/>
    </location>
    <ligand>
        <name>NAD(+)</name>
        <dbReference type="ChEBI" id="CHEBI:57540"/>
    </ligand>
</feature>
<feature type="binding site" evidence="1">
    <location>
        <position position="80"/>
    </location>
    <ligand>
        <name>NAD(+)</name>
        <dbReference type="ChEBI" id="CHEBI:57540"/>
    </ligand>
</feature>
<feature type="binding site" evidence="1">
    <location>
        <begin position="152"/>
        <end position="154"/>
    </location>
    <ligand>
        <name>D-glyceraldehyde 3-phosphate</name>
        <dbReference type="ChEBI" id="CHEBI:59776"/>
    </ligand>
</feature>
<feature type="binding site" evidence="1">
    <location>
        <position position="183"/>
    </location>
    <ligand>
        <name>D-glyceraldehyde 3-phosphate</name>
        <dbReference type="ChEBI" id="CHEBI:59776"/>
    </ligand>
</feature>
<feature type="binding site" evidence="1">
    <location>
        <position position="184"/>
    </location>
    <ligand>
        <name>NAD(+)</name>
        <dbReference type="ChEBI" id="CHEBI:57540"/>
    </ligand>
</feature>
<feature type="binding site" evidence="1">
    <location>
        <position position="198"/>
    </location>
    <ligand>
        <name>D-glyceraldehyde 3-phosphate</name>
        <dbReference type="ChEBI" id="CHEBI:59776"/>
    </ligand>
</feature>
<feature type="binding site" evidence="1">
    <location>
        <begin position="211"/>
        <end position="212"/>
    </location>
    <ligand>
        <name>D-glyceraldehyde 3-phosphate</name>
        <dbReference type="ChEBI" id="CHEBI:59776"/>
    </ligand>
</feature>
<feature type="binding site" evidence="1">
    <location>
        <position position="234"/>
    </location>
    <ligand>
        <name>D-glyceraldehyde 3-phosphate</name>
        <dbReference type="ChEBI" id="CHEBI:59776"/>
    </ligand>
</feature>
<feature type="binding site" evidence="1">
    <location>
        <position position="317"/>
    </location>
    <ligand>
        <name>NAD(+)</name>
        <dbReference type="ChEBI" id="CHEBI:57540"/>
    </ligand>
</feature>
<feature type="site" description="Activates thiol group during catalysis" evidence="4">
    <location>
        <position position="180"/>
    </location>
</feature>
<gene>
    <name type="primary">gap3</name>
    <name type="ordered locus">alr1095</name>
</gene>
<proteinExistence type="evidence at transcript level"/>
<name>G3P3_NOSS1</name>
<organism>
    <name type="scientific">Nostoc sp. (strain PCC 7120 / SAG 25.82 / UTEX 2576)</name>
    <dbReference type="NCBI Taxonomy" id="103690"/>
    <lineage>
        <taxon>Bacteria</taxon>
        <taxon>Bacillati</taxon>
        <taxon>Cyanobacteriota</taxon>
        <taxon>Cyanophyceae</taxon>
        <taxon>Nostocales</taxon>
        <taxon>Nostocaceae</taxon>
        <taxon>Nostoc</taxon>
    </lineage>
</organism>
<sequence>MKVRVGINGFGRMGRLALRAAWDWPELEFVHINEIKGGAVAAAHLLKFDSVHGRWTPEVEAEGERVLIDGTPLSFSEYGKPDDVPWEDFGVDLVLECSGKFRTPATLDPYFKRGVQKVIVAAPVKEEALNIVMGVNDYLYEPEKHHLLTAASCTTNCLAPVVKVIHEGLGIKHGIITTIHDNTNTQTLVDAPHKDLRRARATSLSLIPTTTGSATAIALIYPELKGKLNGIAVRVPLLNASLTDCVFEVTRPTTVEEINALLKAASEQAPLQGILGYEERPLVSIDYKDDPRSSIIDALSTMVVDETQVKILAWYDNEWGYVNRMVELARKVALSLK</sequence>
<reference key="1">
    <citation type="journal article" date="2001" name="DNA Res.">
        <title>Complete genomic sequence of the filamentous nitrogen-fixing cyanobacterium Anabaena sp. strain PCC 7120.</title>
        <authorList>
            <person name="Kaneko T."/>
            <person name="Nakamura Y."/>
            <person name="Wolk C.P."/>
            <person name="Kuritz T."/>
            <person name="Sasamoto S."/>
            <person name="Watanabe A."/>
            <person name="Iriguchi M."/>
            <person name="Ishikawa A."/>
            <person name="Kawashima K."/>
            <person name="Kimura T."/>
            <person name="Kishida Y."/>
            <person name="Kohara M."/>
            <person name="Matsumoto M."/>
            <person name="Matsuno A."/>
            <person name="Muraki A."/>
            <person name="Nakazaki N."/>
            <person name="Shimpo S."/>
            <person name="Sugimoto M."/>
            <person name="Takazawa M."/>
            <person name="Yamada M."/>
            <person name="Yasuda M."/>
            <person name="Tabata S."/>
        </authorList>
    </citation>
    <scope>NUCLEOTIDE SEQUENCE [LARGE SCALE GENOMIC DNA]</scope>
    <source>
        <strain>PCC 7120 / SAG 25.82 / UTEX 2576</strain>
    </source>
</reference>
<reference key="2">
    <citation type="journal article" date="2001" name="Biochem. Biophys. Res. Commun.">
        <title>Simultaneous occurrence of two different glyceraldehyde-3-phosphate dehydrogenases in heterocystous N(2)-fixing cyanobacteria.</title>
        <authorList>
            <person name="Valverde F."/>
            <person name="Peleato M.L."/>
            <person name="Fillat M.F."/>
            <person name="Gomez-Moreno C."/>
            <person name="Losada M."/>
            <person name="Serrano A."/>
        </authorList>
    </citation>
    <scope>FUNCTION</scope>
    <scope>DEVELOPMENTAL STAGE</scope>
    <source>
        <strain>PCC 7120 / SAG 25.82 / UTEX 2576</strain>
    </source>
</reference>
<accession>P58559</accession>
<evidence type="ECO:0000250" key="1">
    <source>
        <dbReference type="UniProtKB" id="P00362"/>
    </source>
</evidence>
<evidence type="ECO:0000250" key="2">
    <source>
        <dbReference type="UniProtKB" id="P09124"/>
    </source>
</evidence>
<evidence type="ECO:0000250" key="3">
    <source>
        <dbReference type="UniProtKB" id="P80506"/>
    </source>
</evidence>
<evidence type="ECO:0000250" key="4">
    <source>
        <dbReference type="UniProtKB" id="Q6GIL8"/>
    </source>
</evidence>
<evidence type="ECO:0000269" key="5">
    <source>
    </source>
</evidence>
<evidence type="ECO:0000303" key="6">
    <source>
    </source>
</evidence>
<evidence type="ECO:0000305" key="7"/>
<evidence type="ECO:0000305" key="8">
    <source>
    </source>
</evidence>
<dbReference type="EC" id="1.2.1.12" evidence="2"/>
<dbReference type="EMBL" id="BA000019">
    <property type="protein sequence ID" value="BAB73052.1"/>
    <property type="molecule type" value="Genomic_DNA"/>
</dbReference>
<dbReference type="PIR" id="AD1943">
    <property type="entry name" value="AD1943"/>
</dbReference>
<dbReference type="RefSeq" id="WP_010995269.1">
    <property type="nucleotide sequence ID" value="NZ_RSCN01000008.1"/>
</dbReference>
<dbReference type="SMR" id="P58559"/>
<dbReference type="STRING" id="103690.gene:10493109"/>
<dbReference type="KEGG" id="ana:alr1095"/>
<dbReference type="eggNOG" id="COG0057">
    <property type="taxonomic scope" value="Bacteria"/>
</dbReference>
<dbReference type="OrthoDB" id="9803304at2"/>
<dbReference type="UniPathway" id="UPA00109">
    <property type="reaction ID" value="UER00184"/>
</dbReference>
<dbReference type="UniPathway" id="UPA00138"/>
<dbReference type="Proteomes" id="UP000002483">
    <property type="component" value="Chromosome"/>
</dbReference>
<dbReference type="GO" id="GO:0005737">
    <property type="term" value="C:cytoplasm"/>
    <property type="evidence" value="ECO:0007669"/>
    <property type="project" value="UniProtKB-SubCell"/>
</dbReference>
<dbReference type="GO" id="GO:0004365">
    <property type="term" value="F:glyceraldehyde-3-phosphate dehydrogenase (NAD+) (phosphorylating) activity"/>
    <property type="evidence" value="ECO:0000250"/>
    <property type="project" value="UniProtKB"/>
</dbReference>
<dbReference type="GO" id="GO:0051287">
    <property type="term" value="F:NAD binding"/>
    <property type="evidence" value="ECO:0000250"/>
    <property type="project" value="UniProtKB"/>
</dbReference>
<dbReference type="GO" id="GO:0050661">
    <property type="term" value="F:NADP binding"/>
    <property type="evidence" value="ECO:0007669"/>
    <property type="project" value="InterPro"/>
</dbReference>
<dbReference type="GO" id="GO:0006094">
    <property type="term" value="P:gluconeogenesis"/>
    <property type="evidence" value="ECO:0007669"/>
    <property type="project" value="UniProtKB-UniPathway"/>
</dbReference>
<dbReference type="GO" id="GO:0006096">
    <property type="term" value="P:glycolytic process"/>
    <property type="evidence" value="ECO:0007669"/>
    <property type="project" value="UniProtKB-UniPathway"/>
</dbReference>
<dbReference type="CDD" id="cd18126">
    <property type="entry name" value="GAPDH_I_C"/>
    <property type="match status" value="1"/>
</dbReference>
<dbReference type="CDD" id="cd05214">
    <property type="entry name" value="GAPDH_I_N"/>
    <property type="match status" value="1"/>
</dbReference>
<dbReference type="FunFam" id="3.30.360.10:FF:000002">
    <property type="entry name" value="Glyceraldehyde-3-phosphate dehydrogenase"/>
    <property type="match status" value="1"/>
</dbReference>
<dbReference type="FunFam" id="3.40.50.720:FF:000507">
    <property type="entry name" value="Glyceraldehyde-3-phosphate dehydrogenase"/>
    <property type="match status" value="1"/>
</dbReference>
<dbReference type="Gene3D" id="3.30.360.10">
    <property type="entry name" value="Dihydrodipicolinate Reductase, domain 2"/>
    <property type="match status" value="1"/>
</dbReference>
<dbReference type="Gene3D" id="3.40.50.720">
    <property type="entry name" value="NAD(P)-binding Rossmann-like Domain"/>
    <property type="match status" value="1"/>
</dbReference>
<dbReference type="InterPro" id="IPR054835">
    <property type="entry name" value="G3PDH_Arsen"/>
</dbReference>
<dbReference type="InterPro" id="IPR052978">
    <property type="entry name" value="GAP_dehydrogenase"/>
</dbReference>
<dbReference type="InterPro" id="IPR020831">
    <property type="entry name" value="GlycerAld/Erythrose_P_DH"/>
</dbReference>
<dbReference type="InterPro" id="IPR020830">
    <property type="entry name" value="GlycerAld_3-P_DH_AS"/>
</dbReference>
<dbReference type="InterPro" id="IPR020829">
    <property type="entry name" value="GlycerAld_3-P_DH_cat"/>
</dbReference>
<dbReference type="InterPro" id="IPR020828">
    <property type="entry name" value="GlycerAld_3-P_DH_NAD(P)-bd"/>
</dbReference>
<dbReference type="InterPro" id="IPR006424">
    <property type="entry name" value="Glyceraldehyde-3-P_DH_1"/>
</dbReference>
<dbReference type="InterPro" id="IPR036291">
    <property type="entry name" value="NAD(P)-bd_dom_sf"/>
</dbReference>
<dbReference type="NCBIfam" id="NF033735">
    <property type="entry name" value="G3PDH_Arsen"/>
    <property type="match status" value="1"/>
</dbReference>
<dbReference type="NCBIfam" id="TIGR01534">
    <property type="entry name" value="GAPDH-I"/>
    <property type="match status" value="1"/>
</dbReference>
<dbReference type="PANTHER" id="PTHR42955">
    <property type="entry name" value="GLYCERALDEHYDE-3-PHOSPHATE DEHYDROGENASE"/>
    <property type="match status" value="1"/>
</dbReference>
<dbReference type="PANTHER" id="PTHR42955:SF1">
    <property type="entry name" value="GLYCERALDEHYDE-3-PHOSPHATE DEHYDROGENASE"/>
    <property type="match status" value="1"/>
</dbReference>
<dbReference type="Pfam" id="PF02800">
    <property type="entry name" value="Gp_dh_C"/>
    <property type="match status" value="1"/>
</dbReference>
<dbReference type="Pfam" id="PF00044">
    <property type="entry name" value="Gp_dh_N"/>
    <property type="match status" value="1"/>
</dbReference>
<dbReference type="PIRSF" id="PIRSF000149">
    <property type="entry name" value="GAP_DH"/>
    <property type="match status" value="1"/>
</dbReference>
<dbReference type="PRINTS" id="PR00078">
    <property type="entry name" value="G3PDHDRGNASE"/>
</dbReference>
<dbReference type="SMART" id="SM00846">
    <property type="entry name" value="Gp_dh_N"/>
    <property type="match status" value="1"/>
</dbReference>
<dbReference type="SUPFAM" id="SSF55347">
    <property type="entry name" value="Glyceraldehyde-3-phosphate dehydrogenase-like, C-terminal domain"/>
    <property type="match status" value="1"/>
</dbReference>
<dbReference type="SUPFAM" id="SSF51735">
    <property type="entry name" value="NAD(P)-binding Rossmann-fold domains"/>
    <property type="match status" value="1"/>
</dbReference>
<dbReference type="PROSITE" id="PS00071">
    <property type="entry name" value="GAPDH"/>
    <property type="match status" value="1"/>
</dbReference>
<protein>
    <recommendedName>
        <fullName evidence="6">Glyceraldehyde-3-phosphate dehydrogenase 3</fullName>
        <shortName evidence="6">GAPDH 3</shortName>
        <ecNumber evidence="2">1.2.1.12</ecNumber>
    </recommendedName>
    <alternativeName>
        <fullName evidence="6">NAD-dependent glyceraldehyde-3-phosphate dehydrogenase</fullName>
    </alternativeName>
</protein>
<keyword id="KW-0963">Cytoplasm</keyword>
<keyword id="KW-0312">Gluconeogenesis</keyword>
<keyword id="KW-0324">Glycolysis</keyword>
<keyword id="KW-0520">NAD</keyword>
<keyword id="KW-0547">Nucleotide-binding</keyword>
<keyword id="KW-0560">Oxidoreductase</keyword>
<keyword id="KW-1185">Reference proteome</keyword>
<comment type="function">
    <text evidence="5">Catalyzes the oxidative phosphorylation of glyceraldehyde 3-phosphate (G3P) to 1,3-bisphosphoglycerate (BPG) using the cofactor NAD. The first reaction step involves the formation of a hemiacetal intermediate between G3P and a cysteine residue, and this hemiacetal intermediate is then oxidized to a thioester, with concomitant reduction of NAD to NADH. The reduced NADH is then exchanged with the second NAD, and the thioester is attacked by a nucleophilic inorganic phosphate to produce BPG.</text>
</comment>
<comment type="catalytic activity">
    <reaction evidence="2">
        <text>D-glyceraldehyde 3-phosphate + phosphate + NAD(+) = (2R)-3-phospho-glyceroyl phosphate + NADH + H(+)</text>
        <dbReference type="Rhea" id="RHEA:10300"/>
        <dbReference type="ChEBI" id="CHEBI:15378"/>
        <dbReference type="ChEBI" id="CHEBI:43474"/>
        <dbReference type="ChEBI" id="CHEBI:57540"/>
        <dbReference type="ChEBI" id="CHEBI:57604"/>
        <dbReference type="ChEBI" id="CHEBI:57945"/>
        <dbReference type="ChEBI" id="CHEBI:59776"/>
        <dbReference type="EC" id="1.2.1.12"/>
    </reaction>
</comment>
<comment type="pathway">
    <text evidence="8">Carbohydrate degradation; glycolysis; pyruvate from D-glyceraldehyde 3-phosphate: step 1/5.</text>
</comment>
<comment type="pathway">
    <text evidence="8">Carbohydrate biosynthesis; gluconeogenesis.</text>
</comment>
<comment type="subunit">
    <text evidence="3">Homotetramer.</text>
</comment>
<comment type="subcellular location">
    <subcellularLocation>
        <location evidence="7">Cytoplasm</location>
    </subcellularLocation>
</comment>
<comment type="developmental stage">
    <text evidence="5">Expressed in vegetative cells and heterocysts, although expression is substantial in both cell types, it is higher in heterocysts.</text>
</comment>
<comment type="miscellaneous">
    <text evidence="5">Gap3 is certainly the main GAPDH present in cells, since no significant Gap1 is detected in cells under different growth conditions.</text>
</comment>
<comment type="similarity">
    <text evidence="7">Belongs to the glyceraldehyde-3-phosphate dehydrogenase family.</text>
</comment>